<reference key="1">
    <citation type="submission" date="2004-05" db="EMBL/GenBank/DDBJ databases">
        <title>Western Taipan venom gland cDNA encoding microlepidin-2.</title>
        <authorList>
            <person name="Filippovich I."/>
            <person name="Sorokina N.I."/>
        </authorList>
    </citation>
    <scope>NUCLEOTIDE SEQUENCE [MRNA]</scope>
    <source>
        <tissue>Venom gland</tissue>
    </source>
</reference>
<accession>Q6ITB4</accession>
<dbReference type="EMBL" id="AY626931">
    <property type="protein sequence ID" value="AAT45407.1"/>
    <property type="molecule type" value="mRNA"/>
</dbReference>
<dbReference type="SMR" id="Q6ITB4"/>
<dbReference type="MEROPS" id="I02.052"/>
<dbReference type="GO" id="GO:0005615">
    <property type="term" value="C:extracellular space"/>
    <property type="evidence" value="ECO:0007669"/>
    <property type="project" value="TreeGrafter"/>
</dbReference>
<dbReference type="GO" id="GO:0004867">
    <property type="term" value="F:serine-type endopeptidase inhibitor activity"/>
    <property type="evidence" value="ECO:0007669"/>
    <property type="project" value="UniProtKB-KW"/>
</dbReference>
<dbReference type="CDD" id="cd22594">
    <property type="entry name" value="Kunitz_textilinin-like"/>
    <property type="match status" value="1"/>
</dbReference>
<dbReference type="FunFam" id="4.10.410.10:FF:000021">
    <property type="entry name" value="Serine protease inhibitor, putative"/>
    <property type="match status" value="1"/>
</dbReference>
<dbReference type="Gene3D" id="4.10.410.10">
    <property type="entry name" value="Pancreatic trypsin inhibitor Kunitz domain"/>
    <property type="match status" value="1"/>
</dbReference>
<dbReference type="InterPro" id="IPR002223">
    <property type="entry name" value="Kunitz_BPTI"/>
</dbReference>
<dbReference type="InterPro" id="IPR036880">
    <property type="entry name" value="Kunitz_BPTI_sf"/>
</dbReference>
<dbReference type="InterPro" id="IPR020901">
    <property type="entry name" value="Prtase_inh_Kunz-CS"/>
</dbReference>
<dbReference type="InterPro" id="IPR050098">
    <property type="entry name" value="TFPI/VKTCI-like"/>
</dbReference>
<dbReference type="PANTHER" id="PTHR10083">
    <property type="entry name" value="KUNITZ-TYPE PROTEASE INHIBITOR-RELATED"/>
    <property type="match status" value="1"/>
</dbReference>
<dbReference type="PANTHER" id="PTHR10083:SF376">
    <property type="entry name" value="SERINE PEPTIDASE INHIBITOR, KUNITZ TYPE, 3"/>
    <property type="match status" value="1"/>
</dbReference>
<dbReference type="Pfam" id="PF00014">
    <property type="entry name" value="Kunitz_BPTI"/>
    <property type="match status" value="1"/>
</dbReference>
<dbReference type="PRINTS" id="PR00759">
    <property type="entry name" value="BASICPTASE"/>
</dbReference>
<dbReference type="SMART" id="SM00131">
    <property type="entry name" value="KU"/>
    <property type="match status" value="1"/>
</dbReference>
<dbReference type="SUPFAM" id="SSF57362">
    <property type="entry name" value="BPTI-like"/>
    <property type="match status" value="1"/>
</dbReference>
<dbReference type="PROSITE" id="PS00280">
    <property type="entry name" value="BPTI_KUNITZ_1"/>
    <property type="match status" value="1"/>
</dbReference>
<dbReference type="PROSITE" id="PS50279">
    <property type="entry name" value="BPTI_KUNITZ_2"/>
    <property type="match status" value="1"/>
</dbReference>
<sequence>MSSGGLLLLLGLLTLWEVLTPVSSKDRPDFCELPADTGPCRVGFPSFYYNPDEKKCLEFIYGGCEGNANNFITKEECESTCAA</sequence>
<organism>
    <name type="scientific">Oxyuranus microlepidotus</name>
    <name type="common">Inland taipan</name>
    <name type="synonym">Diemenia microlepidota</name>
    <dbReference type="NCBI Taxonomy" id="111177"/>
    <lineage>
        <taxon>Eukaryota</taxon>
        <taxon>Metazoa</taxon>
        <taxon>Chordata</taxon>
        <taxon>Craniata</taxon>
        <taxon>Vertebrata</taxon>
        <taxon>Euteleostomi</taxon>
        <taxon>Lepidosauria</taxon>
        <taxon>Squamata</taxon>
        <taxon>Bifurcata</taxon>
        <taxon>Unidentata</taxon>
        <taxon>Episquamata</taxon>
        <taxon>Toxicofera</taxon>
        <taxon>Serpentes</taxon>
        <taxon>Colubroidea</taxon>
        <taxon>Elapidae</taxon>
        <taxon>Hydrophiinae</taxon>
        <taxon>Oxyuranus</taxon>
    </lineage>
</organism>
<proteinExistence type="evidence at transcript level"/>
<evidence type="ECO:0000250" key="1"/>
<evidence type="ECO:0000255" key="2"/>
<evidence type="ECO:0000255" key="3">
    <source>
        <dbReference type="PROSITE-ProRule" id="PRU00031"/>
    </source>
</evidence>
<evidence type="ECO:0000305" key="4"/>
<keyword id="KW-1015">Disulfide bond</keyword>
<keyword id="KW-0646">Protease inhibitor</keyword>
<keyword id="KW-0964">Secreted</keyword>
<keyword id="KW-0722">Serine protease inhibitor</keyword>
<keyword id="KW-0732">Signal</keyword>
<feature type="signal peptide" evidence="2">
    <location>
        <begin position="1"/>
        <end position="24"/>
    </location>
</feature>
<feature type="chain" id="PRO_0000376892" description="Kunitz-type serine protease inhibitor microlepidin-2">
    <location>
        <begin position="25"/>
        <end position="83"/>
    </location>
</feature>
<feature type="domain" description="BPTI/Kunitz inhibitor" evidence="3">
    <location>
        <begin position="31"/>
        <end position="81"/>
    </location>
</feature>
<feature type="site" description="Reactive bond for trypsin" evidence="1">
    <location>
        <begin position="41"/>
        <end position="42"/>
    </location>
</feature>
<feature type="disulfide bond" evidence="3">
    <location>
        <begin position="31"/>
        <end position="81"/>
    </location>
</feature>
<feature type="disulfide bond" evidence="3">
    <location>
        <begin position="40"/>
        <end position="64"/>
    </location>
</feature>
<feature type="disulfide bond" evidence="3">
    <location>
        <begin position="56"/>
        <end position="77"/>
    </location>
</feature>
<name>VKT2_OXYMI</name>
<protein>
    <recommendedName>
        <fullName>Kunitz-type serine protease inhibitor microlepidin-2</fullName>
    </recommendedName>
</protein>
<comment type="function">
    <text evidence="1">Serine protease inhibitor.</text>
</comment>
<comment type="subcellular location">
    <subcellularLocation>
        <location evidence="1">Secreted</location>
    </subcellularLocation>
</comment>
<comment type="tissue specificity">
    <text>Expressed by the venom gland.</text>
</comment>
<comment type="similarity">
    <text evidence="4">Belongs to the venom Kunitz-type family.</text>
</comment>